<dbReference type="EMBL" id="L77117">
    <property type="protein sequence ID" value="AAB98209.1"/>
    <property type="molecule type" value="Genomic_DNA"/>
</dbReference>
<dbReference type="PIR" id="A64328">
    <property type="entry name" value="A64328"/>
</dbReference>
<dbReference type="RefSeq" id="WP_010869720.1">
    <property type="nucleotide sequence ID" value="NC_000909.1"/>
</dbReference>
<dbReference type="SMR" id="Q57677"/>
<dbReference type="STRING" id="243232.MJ_0224"/>
<dbReference type="PaxDb" id="243232-MJ_0224"/>
<dbReference type="EnsemblBacteria" id="AAB98209">
    <property type="protein sequence ID" value="AAB98209"/>
    <property type="gene ID" value="MJ_0224"/>
</dbReference>
<dbReference type="GeneID" id="1451074"/>
<dbReference type="KEGG" id="mja:MJ_0224"/>
<dbReference type="eggNOG" id="arCOG04364">
    <property type="taxonomic scope" value="Archaea"/>
</dbReference>
<dbReference type="HOGENOM" id="CLU_108786_0_0_2"/>
<dbReference type="InParanoid" id="Q57677"/>
<dbReference type="OrthoDB" id="53060at2157"/>
<dbReference type="PhylomeDB" id="Q57677"/>
<dbReference type="Proteomes" id="UP000000805">
    <property type="component" value="Chromosome"/>
</dbReference>
<dbReference type="InterPro" id="IPR007501">
    <property type="entry name" value="DUF531"/>
</dbReference>
<dbReference type="Pfam" id="PF04407">
    <property type="entry name" value="DUF531"/>
    <property type="match status" value="1"/>
</dbReference>
<dbReference type="PIRSF" id="PIRSF006006">
    <property type="entry name" value="UCP006006"/>
    <property type="match status" value="1"/>
</dbReference>
<protein>
    <recommendedName>
        <fullName>Uncharacterized protein MJ0224</fullName>
    </recommendedName>
</protein>
<reference key="1">
    <citation type="journal article" date="1996" name="Science">
        <title>Complete genome sequence of the methanogenic archaeon, Methanococcus jannaschii.</title>
        <authorList>
            <person name="Bult C.J."/>
            <person name="White O."/>
            <person name="Olsen G.J."/>
            <person name="Zhou L."/>
            <person name="Fleischmann R.D."/>
            <person name="Sutton G.G."/>
            <person name="Blake J.A."/>
            <person name="FitzGerald L.M."/>
            <person name="Clayton R.A."/>
            <person name="Gocayne J.D."/>
            <person name="Kerlavage A.R."/>
            <person name="Dougherty B.A."/>
            <person name="Tomb J.-F."/>
            <person name="Adams M.D."/>
            <person name="Reich C.I."/>
            <person name="Overbeek R."/>
            <person name="Kirkness E.F."/>
            <person name="Weinstock K.G."/>
            <person name="Merrick J.M."/>
            <person name="Glodek A."/>
            <person name="Scott J.L."/>
            <person name="Geoghagen N.S.M."/>
            <person name="Weidman J.F."/>
            <person name="Fuhrmann J.L."/>
            <person name="Nguyen D."/>
            <person name="Utterback T.R."/>
            <person name="Kelley J.M."/>
            <person name="Peterson J.D."/>
            <person name="Sadow P.W."/>
            <person name="Hanna M.C."/>
            <person name="Cotton M.D."/>
            <person name="Roberts K.M."/>
            <person name="Hurst M.A."/>
            <person name="Kaine B.P."/>
            <person name="Borodovsky M."/>
            <person name="Klenk H.-P."/>
            <person name="Fraser C.M."/>
            <person name="Smith H.O."/>
            <person name="Woese C.R."/>
            <person name="Venter J.C."/>
        </authorList>
    </citation>
    <scope>NUCLEOTIDE SEQUENCE [LARGE SCALE GENOMIC DNA]</scope>
    <source>
        <strain>ATCC 43067 / DSM 2661 / JAL-1 / JCM 10045 / NBRC 100440</strain>
    </source>
</reference>
<proteinExistence type="predicted"/>
<keyword id="KW-1185">Reference proteome</keyword>
<name>Y224_METJA</name>
<accession>Q57677</accession>
<organism>
    <name type="scientific">Methanocaldococcus jannaschii (strain ATCC 43067 / DSM 2661 / JAL-1 / JCM 10045 / NBRC 100440)</name>
    <name type="common">Methanococcus jannaschii</name>
    <dbReference type="NCBI Taxonomy" id="243232"/>
    <lineage>
        <taxon>Archaea</taxon>
        <taxon>Methanobacteriati</taxon>
        <taxon>Methanobacteriota</taxon>
        <taxon>Methanomada group</taxon>
        <taxon>Methanococci</taxon>
        <taxon>Methanococcales</taxon>
        <taxon>Methanocaldococcaceae</taxon>
        <taxon>Methanocaldococcus</taxon>
    </lineage>
</organism>
<gene>
    <name type="ordered locus">MJ0224</name>
</gene>
<sequence>MKKLKRLTLILYNSYDKTRWHEAHKRAIARAAPICYAFDCNLAIMDFPCKMEDILNIKTTIGNSGEYLEKLIEKNRFFIVDKFLPQFGIPIASTSKPDEKKAITPLDTAYLLKKKPIGVYVGLGRHGLPKDIMESCVYHLDVTEKRVSLETCTAIGSIPAVIYCYTKYI</sequence>
<feature type="chain" id="PRO_0000106747" description="Uncharacterized protein MJ0224">
    <location>
        <begin position="1"/>
        <end position="169"/>
    </location>
</feature>